<reference key="1">
    <citation type="journal article" date="1996" name="Mol. Immunol.">
        <title>Purification, characterization and molecular cloning of Cha o 1, a major allergen of Chamaecyparis obtusa (Japanese cypress) pollen.</title>
        <authorList>
            <person name="Suzuki M."/>
            <person name="Komiyama N."/>
            <person name="Itoh M."/>
            <person name="Itoh H."/>
            <person name="Sone T."/>
            <person name="Kuno K."/>
            <person name="Takagi I."/>
            <person name="Ohta N."/>
        </authorList>
    </citation>
    <scope>NUCLEOTIDE SEQUENCE [MRNA]</scope>
    <scope>PARTIAL PROTEIN SEQUENCE</scope>
    <scope>ALLERGEN</scope>
    <source>
        <tissue>Pollen</tissue>
    </source>
</reference>
<proteinExistence type="evidence at protein level"/>
<keyword id="KW-0020">Allergen</keyword>
<keyword id="KW-0106">Calcium</keyword>
<keyword id="KW-0903">Direct protein sequencing</keyword>
<keyword id="KW-1015">Disulfide bond</keyword>
<keyword id="KW-0325">Glycoprotein</keyword>
<keyword id="KW-0456">Lyase</keyword>
<keyword id="KW-0479">Metal-binding</keyword>
<keyword id="KW-0732">Signal</keyword>
<organism>
    <name type="scientific">Chamaecyparis obtusa</name>
    <name type="common">Hinoki false-cypress</name>
    <name type="synonym">Retinospora obtusa</name>
    <dbReference type="NCBI Taxonomy" id="13415"/>
    <lineage>
        <taxon>Eukaryota</taxon>
        <taxon>Viridiplantae</taxon>
        <taxon>Streptophyta</taxon>
        <taxon>Embryophyta</taxon>
        <taxon>Tracheophyta</taxon>
        <taxon>Spermatophyta</taxon>
        <taxon>Pinopsida</taxon>
        <taxon>Pinidae</taxon>
        <taxon>Conifers II</taxon>
        <taxon>Cupressales</taxon>
        <taxon>Cupressaceae</taxon>
        <taxon>Chamaecyparis</taxon>
    </lineage>
</organism>
<protein>
    <recommendedName>
        <fullName>Pectate lyase 1</fullName>
        <ecNumber>4.2.2.2</ecNumber>
    </recommendedName>
    <alternativeName>
        <fullName>Major pollen allergen Cha o 1</fullName>
    </alternativeName>
    <allergenName>Cha o 1</allergenName>
</protein>
<dbReference type="EC" id="4.2.2.2"/>
<dbReference type="EMBL" id="D45404">
    <property type="protein sequence ID" value="BAA08246.1"/>
    <property type="molecule type" value="mRNA"/>
</dbReference>
<dbReference type="SMR" id="Q96385"/>
<dbReference type="Allergome" id="197">
    <property type="allergen name" value="Cha o 1"/>
</dbReference>
<dbReference type="Allergome" id="3186">
    <property type="allergen name" value="Cha o 1.0101"/>
</dbReference>
<dbReference type="CAZy" id="PL1">
    <property type="family name" value="Polysaccharide Lyase Family 1"/>
</dbReference>
<dbReference type="UniPathway" id="UPA00545">
    <property type="reaction ID" value="UER00824"/>
</dbReference>
<dbReference type="GO" id="GO:0046872">
    <property type="term" value="F:metal ion binding"/>
    <property type="evidence" value="ECO:0007669"/>
    <property type="project" value="UniProtKB-KW"/>
</dbReference>
<dbReference type="GO" id="GO:0030570">
    <property type="term" value="F:pectate lyase activity"/>
    <property type="evidence" value="ECO:0007669"/>
    <property type="project" value="UniProtKB-EC"/>
</dbReference>
<dbReference type="GO" id="GO:0045490">
    <property type="term" value="P:pectin catabolic process"/>
    <property type="evidence" value="ECO:0007669"/>
    <property type="project" value="UniProtKB-UniPathway"/>
</dbReference>
<dbReference type="Gene3D" id="2.160.20.10">
    <property type="entry name" value="Single-stranded right-handed beta-helix, Pectin lyase-like"/>
    <property type="match status" value="1"/>
</dbReference>
<dbReference type="InterPro" id="IPR018082">
    <property type="entry name" value="AmbAllergen"/>
</dbReference>
<dbReference type="InterPro" id="IPR002022">
    <property type="entry name" value="Pec_lyase"/>
</dbReference>
<dbReference type="InterPro" id="IPR012334">
    <property type="entry name" value="Pectin_lyas_fold"/>
</dbReference>
<dbReference type="InterPro" id="IPR011050">
    <property type="entry name" value="Pectin_lyase_fold/virulence"/>
</dbReference>
<dbReference type="InterPro" id="IPR045032">
    <property type="entry name" value="PEL"/>
</dbReference>
<dbReference type="PANTHER" id="PTHR31683:SF80">
    <property type="entry name" value="PECTATE LYASE 16-RELATED"/>
    <property type="match status" value="1"/>
</dbReference>
<dbReference type="PANTHER" id="PTHR31683">
    <property type="entry name" value="PECTATE LYASE 18-RELATED"/>
    <property type="match status" value="1"/>
</dbReference>
<dbReference type="Pfam" id="PF00544">
    <property type="entry name" value="Pectate_lyase_4"/>
    <property type="match status" value="1"/>
</dbReference>
<dbReference type="PRINTS" id="PR00807">
    <property type="entry name" value="AMBALLERGEN"/>
</dbReference>
<dbReference type="SMART" id="SM00656">
    <property type="entry name" value="Amb_all"/>
    <property type="match status" value="1"/>
</dbReference>
<dbReference type="SUPFAM" id="SSF51126">
    <property type="entry name" value="Pectin lyase-like"/>
    <property type="match status" value="1"/>
</dbReference>
<feature type="signal peptide">
    <location>
        <begin position="1"/>
        <end position="21"/>
    </location>
</feature>
<feature type="chain" id="PRO_0000024907" description="Pectate lyase 1">
    <location>
        <begin position="22"/>
        <end position="375"/>
    </location>
</feature>
<feature type="active site" evidence="2">
    <location>
        <position position="250"/>
    </location>
</feature>
<feature type="binding site" evidence="1">
    <location>
        <position position="170"/>
    </location>
    <ligand>
        <name>Ca(2+)</name>
        <dbReference type="ChEBI" id="CHEBI:29108"/>
    </ligand>
</feature>
<feature type="binding site" evidence="1">
    <location>
        <position position="194"/>
    </location>
    <ligand>
        <name>Ca(2+)</name>
        <dbReference type="ChEBI" id="CHEBI:29108"/>
    </ligand>
</feature>
<feature type="binding site" evidence="1">
    <location>
        <position position="198"/>
    </location>
    <ligand>
        <name>Ca(2+)</name>
        <dbReference type="ChEBI" id="CHEBI:29108"/>
    </ligand>
</feature>
<feature type="glycosylation site" description="N-linked (GlcNAc...) asparagine" evidence="2">
    <location>
        <position position="110"/>
    </location>
</feature>
<feature type="glycosylation site" description="N-linked (GlcNAc...) asparagine" evidence="2">
    <location>
        <position position="148"/>
    </location>
</feature>
<feature type="glycosylation site" description="N-linked (GlcNAc...) asparagine" evidence="2">
    <location>
        <position position="178"/>
    </location>
</feature>
<feature type="glycosylation site" description="N-linked (GlcNAc...) asparagine" evidence="2">
    <location>
        <position position="293"/>
    </location>
</feature>
<feature type="glycosylation site" description="N-linked (GlcNAc...) asparagine" evidence="2">
    <location>
        <position position="352"/>
    </location>
</feature>
<feature type="disulfide bond" evidence="1">
    <location>
        <begin position="28"/>
        <end position="45"/>
    </location>
</feature>
<feature type="disulfide bond" evidence="1">
    <location>
        <begin position="128"/>
        <end position="147"/>
    </location>
</feature>
<feature type="disulfide bond" evidence="1">
    <location>
        <begin position="306"/>
        <end position="312"/>
    </location>
</feature>
<accession>Q96385</accession>
<comment type="function">
    <text evidence="1">Has pectate lyase activity.</text>
</comment>
<comment type="catalytic activity">
    <reaction>
        <text>Eliminative cleavage of (1-&gt;4)-alpha-D-galacturonan to give oligosaccharides with 4-deoxy-alpha-D-galact-4-enuronosyl groups at their non-reducing ends.</text>
        <dbReference type="EC" id="4.2.2.2"/>
    </reaction>
</comment>
<comment type="cofactor">
    <cofactor evidence="1">
        <name>Ca(2+)</name>
        <dbReference type="ChEBI" id="CHEBI:29108"/>
    </cofactor>
    <text evidence="1">Binds 1 Ca(2+) ion.</text>
</comment>
<comment type="pathway">
    <text>Glycan metabolism; pectin degradation; 2-dehydro-3-deoxy-D-gluconate from pectin: step 2/5.</text>
</comment>
<comment type="allergen">
    <text evidence="3">Causes an allergic reaction in human.</text>
</comment>
<comment type="similarity">
    <text evidence="4">Belongs to the polysaccharide lyase 1 family. Amb a subfamily.</text>
</comment>
<sequence>MASCTLLAVLVFLCAIVSCFSDNPIDSCWRGDANWDQNRMKLADCAVGFGSSAMGGKGGAFYTVTSSDDDPVNPAPGTLRYGATRERSLWIIFSKNLNIKLNMPLYIAGNKTIDGRGAEVHIGNGGPCLFMRTVSHVILHGLNIHGCNTSVSGNVLISEASGVVPVHAQDGDAITMRNVTDVWIDHNSLSDSSDGLVDVTLASTGVTISNNHFFNHHKVMLLGHSDIYSDDKSMKVTVAFNQFGPNAGQRMPRARYGLIHVANNNYDPWSIYAIGGSSNPTILSEGNSFTAPNDSDKKEVTRRVGCESPSTCANWVWRSTQDSFNNGAYFVSSGKNEGTNIYNNNEAFKVENGSAAPQLTKNAGVLTCILSKPCS</sequence>
<evidence type="ECO:0000250" key="1"/>
<evidence type="ECO:0000255" key="2"/>
<evidence type="ECO:0000269" key="3">
    <source>
    </source>
</evidence>
<evidence type="ECO:0000305" key="4"/>
<name>PLY1_CHAOB</name>